<comment type="function">
    <text evidence="1">Could be a nuclease involved in processing of the 5'-end of pre-16S rRNA.</text>
</comment>
<comment type="subcellular location">
    <subcellularLocation>
        <location evidence="1">Cytoplasm</location>
    </subcellularLocation>
</comment>
<comment type="similarity">
    <text evidence="1">Belongs to the YqgF nuclease family.</text>
</comment>
<comment type="sequence caution" evidence="2">
    <conflict type="erroneous initiation">
        <sequence resource="EMBL-CDS" id="AAF38349"/>
    </conflict>
    <text>Extended N-terminus.</text>
</comment>
<reference key="1">
    <citation type="journal article" date="1999" name="Nat. Genet.">
        <title>Comparative genomes of Chlamydia pneumoniae and C. trachomatis.</title>
        <authorList>
            <person name="Kalman S."/>
            <person name="Mitchell W.P."/>
            <person name="Marathe R."/>
            <person name="Lammel C.J."/>
            <person name="Fan J."/>
            <person name="Hyman R.W."/>
            <person name="Olinger L."/>
            <person name="Grimwood J."/>
            <person name="Davis R.W."/>
            <person name="Stephens R.S."/>
        </authorList>
    </citation>
    <scope>NUCLEOTIDE SEQUENCE [LARGE SCALE GENOMIC DNA]</scope>
    <source>
        <strain>CWL029</strain>
    </source>
</reference>
<reference key="2">
    <citation type="journal article" date="2000" name="Nucleic Acids Res.">
        <title>Genome sequences of Chlamydia trachomatis MoPn and Chlamydia pneumoniae AR39.</title>
        <authorList>
            <person name="Read T.D."/>
            <person name="Brunham R.C."/>
            <person name="Shen C."/>
            <person name="Gill S.R."/>
            <person name="Heidelberg J.F."/>
            <person name="White O."/>
            <person name="Hickey E.K."/>
            <person name="Peterson J.D."/>
            <person name="Utterback T.R."/>
            <person name="Berry K.J."/>
            <person name="Bass S."/>
            <person name="Linher K.D."/>
            <person name="Weidman J.F."/>
            <person name="Khouri H.M."/>
            <person name="Craven B."/>
            <person name="Bowman C."/>
            <person name="Dodson R.J."/>
            <person name="Gwinn M.L."/>
            <person name="Nelson W.C."/>
            <person name="DeBoy R.T."/>
            <person name="Kolonay J.F."/>
            <person name="McClarty G."/>
            <person name="Salzberg S.L."/>
            <person name="Eisen J.A."/>
            <person name="Fraser C.M."/>
        </authorList>
    </citation>
    <scope>NUCLEOTIDE SEQUENCE [LARGE SCALE GENOMIC DNA]</scope>
    <source>
        <strain>AR39</strain>
    </source>
</reference>
<reference key="3">
    <citation type="journal article" date="2000" name="Nucleic Acids Res.">
        <title>Comparison of whole genome sequences of Chlamydia pneumoniae J138 from Japan and CWL029 from USA.</title>
        <authorList>
            <person name="Shirai M."/>
            <person name="Hirakawa H."/>
            <person name="Kimoto M."/>
            <person name="Tabuchi M."/>
            <person name="Kishi F."/>
            <person name="Ouchi K."/>
            <person name="Shiba T."/>
            <person name="Ishii K."/>
            <person name="Hattori M."/>
            <person name="Kuhara S."/>
            <person name="Nakazawa T."/>
        </authorList>
    </citation>
    <scope>NUCLEOTIDE SEQUENCE [LARGE SCALE GENOMIC DNA]</scope>
    <source>
        <strain>J138</strain>
    </source>
</reference>
<reference key="4">
    <citation type="submission" date="2002-05" db="EMBL/GenBank/DDBJ databases">
        <title>The genome sequence of Chlamydia pneumoniae TW183 and comparison with other Chlamydia strains based on whole genome sequence analysis.</title>
        <authorList>
            <person name="Geng M.M."/>
            <person name="Schuhmacher A."/>
            <person name="Muehldorfer I."/>
            <person name="Bensch K.W."/>
            <person name="Schaefer K.P."/>
            <person name="Schneider S."/>
            <person name="Pohl T."/>
            <person name="Essig A."/>
            <person name="Marre R."/>
            <person name="Melchers K."/>
        </authorList>
    </citation>
    <scope>NUCLEOTIDE SEQUENCE [LARGE SCALE GENOMIC DNA]</scope>
    <source>
        <strain>TW-183</strain>
    </source>
</reference>
<keyword id="KW-0963">Cytoplasm</keyword>
<keyword id="KW-0378">Hydrolase</keyword>
<keyword id="KW-0540">Nuclease</keyword>
<keyword id="KW-0690">Ribosome biogenesis</keyword>
<organism>
    <name type="scientific">Chlamydia pneumoniae</name>
    <name type="common">Chlamydophila pneumoniae</name>
    <dbReference type="NCBI Taxonomy" id="83558"/>
    <lineage>
        <taxon>Bacteria</taxon>
        <taxon>Pseudomonadati</taxon>
        <taxon>Chlamydiota</taxon>
        <taxon>Chlamydiia</taxon>
        <taxon>Chlamydiales</taxon>
        <taxon>Chlamydiaceae</taxon>
        <taxon>Chlamydia/Chlamydophila group</taxon>
        <taxon>Chlamydia</taxon>
    </lineage>
</organism>
<feature type="chain" id="PRO_0000172045" description="Putative pre-16S rRNA nuclease">
    <location>
        <begin position="1"/>
        <end position="151"/>
    </location>
</feature>
<proteinExistence type="inferred from homology"/>
<dbReference type="EC" id="3.1.-.-" evidence="1"/>
<dbReference type="EMBL" id="AE001363">
    <property type="protein sequence ID" value="AAD18390.1"/>
    <property type="molecule type" value="Genomic_DNA"/>
</dbReference>
<dbReference type="EMBL" id="AE002161">
    <property type="protein sequence ID" value="AAF38349.1"/>
    <property type="status" value="ALT_INIT"/>
    <property type="molecule type" value="Genomic_DNA"/>
</dbReference>
<dbReference type="EMBL" id="BA000008">
    <property type="protein sequence ID" value="BAA98447.1"/>
    <property type="molecule type" value="Genomic_DNA"/>
</dbReference>
<dbReference type="EMBL" id="AE009440">
    <property type="protein sequence ID" value="AAP98176.1"/>
    <property type="molecule type" value="Genomic_DNA"/>
</dbReference>
<dbReference type="PIR" id="B72103">
    <property type="entry name" value="B72103"/>
</dbReference>
<dbReference type="PIR" id="D81568">
    <property type="entry name" value="D81568"/>
</dbReference>
<dbReference type="PIR" id="E86520">
    <property type="entry name" value="E86520"/>
</dbReference>
<dbReference type="RefSeq" id="NP_224446.1">
    <property type="nucleotide sequence ID" value="NC_000922.1"/>
</dbReference>
<dbReference type="SMR" id="Q9Z8U7"/>
<dbReference type="STRING" id="406984.CPK_ORF00746"/>
<dbReference type="GeneID" id="45050284"/>
<dbReference type="KEGG" id="cpa:CP_0525"/>
<dbReference type="KEGG" id="cpj:yggF"/>
<dbReference type="KEGG" id="cpn:CPn_0237"/>
<dbReference type="KEGG" id="cpt:CpB0243"/>
<dbReference type="PATRIC" id="fig|115713.3.peg.267"/>
<dbReference type="eggNOG" id="COG0816">
    <property type="taxonomic scope" value="Bacteria"/>
</dbReference>
<dbReference type="HOGENOM" id="CLU_098240_1_1_0"/>
<dbReference type="OMA" id="PMGWTAQ"/>
<dbReference type="OrthoDB" id="9796140at2"/>
<dbReference type="Proteomes" id="UP000000583">
    <property type="component" value="Chromosome"/>
</dbReference>
<dbReference type="Proteomes" id="UP000000801">
    <property type="component" value="Chromosome"/>
</dbReference>
<dbReference type="GO" id="GO:0005829">
    <property type="term" value="C:cytosol"/>
    <property type="evidence" value="ECO:0007669"/>
    <property type="project" value="TreeGrafter"/>
</dbReference>
<dbReference type="GO" id="GO:0004518">
    <property type="term" value="F:nuclease activity"/>
    <property type="evidence" value="ECO:0007669"/>
    <property type="project" value="UniProtKB-KW"/>
</dbReference>
<dbReference type="GO" id="GO:0000967">
    <property type="term" value="P:rRNA 5'-end processing"/>
    <property type="evidence" value="ECO:0007669"/>
    <property type="project" value="UniProtKB-UniRule"/>
</dbReference>
<dbReference type="CDD" id="cd16964">
    <property type="entry name" value="YqgF"/>
    <property type="match status" value="1"/>
</dbReference>
<dbReference type="Gene3D" id="3.30.420.140">
    <property type="entry name" value="YqgF/RNase H-like domain"/>
    <property type="match status" value="1"/>
</dbReference>
<dbReference type="HAMAP" id="MF_00651">
    <property type="entry name" value="Nuclease_YqgF"/>
    <property type="match status" value="1"/>
</dbReference>
<dbReference type="InterPro" id="IPR012337">
    <property type="entry name" value="RNaseH-like_sf"/>
</dbReference>
<dbReference type="InterPro" id="IPR005227">
    <property type="entry name" value="YqgF"/>
</dbReference>
<dbReference type="InterPro" id="IPR006641">
    <property type="entry name" value="YqgF/RNaseH-like_dom"/>
</dbReference>
<dbReference type="InterPro" id="IPR037027">
    <property type="entry name" value="YqgF/RNaseH-like_dom_sf"/>
</dbReference>
<dbReference type="NCBIfam" id="TIGR00250">
    <property type="entry name" value="RNAse_H_YqgF"/>
    <property type="match status" value="1"/>
</dbReference>
<dbReference type="PANTHER" id="PTHR33317">
    <property type="entry name" value="POLYNUCLEOTIDYL TRANSFERASE, RIBONUCLEASE H-LIKE SUPERFAMILY PROTEIN"/>
    <property type="match status" value="1"/>
</dbReference>
<dbReference type="PANTHER" id="PTHR33317:SF4">
    <property type="entry name" value="POLYNUCLEOTIDYL TRANSFERASE, RIBONUCLEASE H-LIKE SUPERFAMILY PROTEIN"/>
    <property type="match status" value="1"/>
</dbReference>
<dbReference type="Pfam" id="PF03652">
    <property type="entry name" value="RuvX"/>
    <property type="match status" value="1"/>
</dbReference>
<dbReference type="SMART" id="SM00732">
    <property type="entry name" value="YqgFc"/>
    <property type="match status" value="1"/>
</dbReference>
<dbReference type="SUPFAM" id="SSF53098">
    <property type="entry name" value="Ribonuclease H-like"/>
    <property type="match status" value="1"/>
</dbReference>
<name>YQGF_CHLPN</name>
<protein>
    <recommendedName>
        <fullName evidence="1">Putative pre-16S rRNA nuclease</fullName>
        <ecNumber evidence="1">3.1.-.-</ecNumber>
    </recommendedName>
</protein>
<evidence type="ECO:0000255" key="1">
    <source>
        <dbReference type="HAMAP-Rule" id="MF_00651"/>
    </source>
</evidence>
<evidence type="ECO:0000305" key="2"/>
<gene>
    <name type="ordered locus">CPn_0237</name>
    <name type="ordered locus">CP_0525</name>
    <name type="ordered locus">CPj0237</name>
    <name type="ordered locus">CpB0243</name>
</gene>
<accession>Q9Z8U7</accession>
<accession>Q9JQK0</accession>
<accession>Q9K255</accession>
<sequence>MSKPSSCKAYLGIDYGKKRIGLAYAAEPLLLTLPIGNIEAGKNLKLSAEALHKIILSRNITCVVLGNPLPMQKGLYSSLQEEVSLLAEELKKLSTVEIILWDERLSSVQAERMLKQDCGLSRKDRKGKTDSLAATLILTSFLDSLPKKLTL</sequence>